<dbReference type="EMBL" id="CP001144">
    <property type="protein sequence ID" value="ACH73998.1"/>
    <property type="molecule type" value="Genomic_DNA"/>
</dbReference>
<dbReference type="RefSeq" id="WP_000543533.1">
    <property type="nucleotide sequence ID" value="NC_011205.1"/>
</dbReference>
<dbReference type="SMR" id="B5FKS0"/>
<dbReference type="GeneID" id="66754886"/>
<dbReference type="KEGG" id="sed:SeD_A0456"/>
<dbReference type="HOGENOM" id="CLU_108412_0_0_6"/>
<dbReference type="Proteomes" id="UP000008322">
    <property type="component" value="Chromosome"/>
</dbReference>
<dbReference type="GO" id="GO:0005524">
    <property type="term" value="F:ATP binding"/>
    <property type="evidence" value="ECO:0007669"/>
    <property type="project" value="UniProtKB-KW"/>
</dbReference>
<dbReference type="GO" id="GO:0003677">
    <property type="term" value="F:DNA binding"/>
    <property type="evidence" value="ECO:0007669"/>
    <property type="project" value="UniProtKB-KW"/>
</dbReference>
<dbReference type="GO" id="GO:0008270">
    <property type="term" value="F:zinc ion binding"/>
    <property type="evidence" value="ECO:0007669"/>
    <property type="project" value="UniProtKB-UniRule"/>
</dbReference>
<dbReference type="GO" id="GO:0045892">
    <property type="term" value="P:negative regulation of DNA-templated transcription"/>
    <property type="evidence" value="ECO:0007669"/>
    <property type="project" value="UniProtKB-UniRule"/>
</dbReference>
<dbReference type="HAMAP" id="MF_00440">
    <property type="entry name" value="NrdR"/>
    <property type="match status" value="1"/>
</dbReference>
<dbReference type="InterPro" id="IPR005144">
    <property type="entry name" value="ATP-cone_dom"/>
</dbReference>
<dbReference type="InterPro" id="IPR055173">
    <property type="entry name" value="NrdR-like_N"/>
</dbReference>
<dbReference type="InterPro" id="IPR003796">
    <property type="entry name" value="RNR_NrdR-like"/>
</dbReference>
<dbReference type="NCBIfam" id="TIGR00244">
    <property type="entry name" value="transcriptional regulator NrdR"/>
    <property type="match status" value="1"/>
</dbReference>
<dbReference type="PANTHER" id="PTHR30455">
    <property type="entry name" value="TRANSCRIPTIONAL REPRESSOR NRDR"/>
    <property type="match status" value="1"/>
</dbReference>
<dbReference type="PANTHER" id="PTHR30455:SF2">
    <property type="entry name" value="TRANSCRIPTIONAL REPRESSOR NRDR"/>
    <property type="match status" value="1"/>
</dbReference>
<dbReference type="Pfam" id="PF03477">
    <property type="entry name" value="ATP-cone"/>
    <property type="match status" value="1"/>
</dbReference>
<dbReference type="Pfam" id="PF22811">
    <property type="entry name" value="Zn_ribbon_NrdR"/>
    <property type="match status" value="1"/>
</dbReference>
<dbReference type="PROSITE" id="PS51161">
    <property type="entry name" value="ATP_CONE"/>
    <property type="match status" value="1"/>
</dbReference>
<feature type="chain" id="PRO_1000124541" description="Transcriptional repressor NrdR">
    <location>
        <begin position="1"/>
        <end position="149"/>
    </location>
</feature>
<feature type="domain" description="ATP-cone" evidence="1">
    <location>
        <begin position="49"/>
        <end position="139"/>
    </location>
</feature>
<feature type="zinc finger region" evidence="1">
    <location>
        <begin position="3"/>
        <end position="34"/>
    </location>
</feature>
<proteinExistence type="inferred from homology"/>
<organism>
    <name type="scientific">Salmonella dublin (strain CT_02021853)</name>
    <dbReference type="NCBI Taxonomy" id="439851"/>
    <lineage>
        <taxon>Bacteria</taxon>
        <taxon>Pseudomonadati</taxon>
        <taxon>Pseudomonadota</taxon>
        <taxon>Gammaproteobacteria</taxon>
        <taxon>Enterobacterales</taxon>
        <taxon>Enterobacteriaceae</taxon>
        <taxon>Salmonella</taxon>
    </lineage>
</organism>
<name>NRDR_SALDC</name>
<keyword id="KW-0067">ATP-binding</keyword>
<keyword id="KW-0238">DNA-binding</keyword>
<keyword id="KW-0479">Metal-binding</keyword>
<keyword id="KW-0547">Nucleotide-binding</keyword>
<keyword id="KW-0678">Repressor</keyword>
<keyword id="KW-0804">Transcription</keyword>
<keyword id="KW-0805">Transcription regulation</keyword>
<keyword id="KW-0862">Zinc</keyword>
<keyword id="KW-0863">Zinc-finger</keyword>
<accession>B5FKS0</accession>
<protein>
    <recommendedName>
        <fullName evidence="1">Transcriptional repressor NrdR</fullName>
    </recommendedName>
</protein>
<sequence>MHCPFCFAVDTKVIDSRLVGEGSSVRRRRQCLVCNERFTTFEVAELVMPRVIKSNDVREPFNEDKLRSGMLRALEKRPVSADDVEMALNHIKSQLRATGEREVPSKMIGNLVMEQLKKLDKVAYIRFASVYRSFEDIKDFGEEIARLQD</sequence>
<gene>
    <name evidence="1" type="primary">nrdR</name>
    <name type="ordered locus">SeD_A0456</name>
</gene>
<evidence type="ECO:0000255" key="1">
    <source>
        <dbReference type="HAMAP-Rule" id="MF_00440"/>
    </source>
</evidence>
<comment type="function">
    <text evidence="1">Negatively regulates transcription of bacterial ribonucleotide reductase nrd genes and operons by binding to NrdR-boxes.</text>
</comment>
<comment type="cofactor">
    <cofactor evidence="1">
        <name>Zn(2+)</name>
        <dbReference type="ChEBI" id="CHEBI:29105"/>
    </cofactor>
    <text evidence="1">Binds 1 zinc ion.</text>
</comment>
<comment type="similarity">
    <text evidence="1">Belongs to the NrdR family.</text>
</comment>
<reference key="1">
    <citation type="journal article" date="2011" name="J. Bacteriol.">
        <title>Comparative genomics of 28 Salmonella enterica isolates: evidence for CRISPR-mediated adaptive sublineage evolution.</title>
        <authorList>
            <person name="Fricke W.F."/>
            <person name="Mammel M.K."/>
            <person name="McDermott P.F."/>
            <person name="Tartera C."/>
            <person name="White D.G."/>
            <person name="Leclerc J.E."/>
            <person name="Ravel J."/>
            <person name="Cebula T.A."/>
        </authorList>
    </citation>
    <scope>NUCLEOTIDE SEQUENCE [LARGE SCALE GENOMIC DNA]</scope>
    <source>
        <strain>CT_02021853</strain>
    </source>
</reference>